<evidence type="ECO:0000255" key="1">
    <source>
        <dbReference type="HAMAP-Rule" id="MF_00011"/>
    </source>
</evidence>
<feature type="chain" id="PRO_1000000775" description="Adenylosuccinate synthetase">
    <location>
        <begin position="1"/>
        <end position="447"/>
    </location>
</feature>
<feature type="active site" description="Proton acceptor" evidence="1">
    <location>
        <position position="13"/>
    </location>
</feature>
<feature type="active site" description="Proton donor" evidence="1">
    <location>
        <position position="41"/>
    </location>
</feature>
<feature type="binding site" evidence="1">
    <location>
        <begin position="12"/>
        <end position="18"/>
    </location>
    <ligand>
        <name>GTP</name>
        <dbReference type="ChEBI" id="CHEBI:37565"/>
    </ligand>
</feature>
<feature type="binding site" description="in other chain" evidence="1">
    <location>
        <begin position="13"/>
        <end position="16"/>
    </location>
    <ligand>
        <name>IMP</name>
        <dbReference type="ChEBI" id="CHEBI:58053"/>
        <note>ligand shared between dimeric partners</note>
    </ligand>
</feature>
<feature type="binding site" evidence="1">
    <location>
        <position position="13"/>
    </location>
    <ligand>
        <name>Mg(2+)</name>
        <dbReference type="ChEBI" id="CHEBI:18420"/>
    </ligand>
</feature>
<feature type="binding site" description="in other chain" evidence="1">
    <location>
        <begin position="38"/>
        <end position="41"/>
    </location>
    <ligand>
        <name>IMP</name>
        <dbReference type="ChEBI" id="CHEBI:58053"/>
        <note>ligand shared between dimeric partners</note>
    </ligand>
</feature>
<feature type="binding site" evidence="1">
    <location>
        <begin position="40"/>
        <end position="42"/>
    </location>
    <ligand>
        <name>GTP</name>
        <dbReference type="ChEBI" id="CHEBI:37565"/>
    </ligand>
</feature>
<feature type="binding site" evidence="1">
    <location>
        <position position="40"/>
    </location>
    <ligand>
        <name>Mg(2+)</name>
        <dbReference type="ChEBI" id="CHEBI:18420"/>
    </ligand>
</feature>
<feature type="binding site" description="in other chain" evidence="1">
    <location>
        <position position="128"/>
    </location>
    <ligand>
        <name>IMP</name>
        <dbReference type="ChEBI" id="CHEBI:58053"/>
        <note>ligand shared between dimeric partners</note>
    </ligand>
</feature>
<feature type="binding site" evidence="1">
    <location>
        <position position="142"/>
    </location>
    <ligand>
        <name>IMP</name>
        <dbReference type="ChEBI" id="CHEBI:58053"/>
        <note>ligand shared between dimeric partners</note>
    </ligand>
</feature>
<feature type="binding site" description="in other chain" evidence="1">
    <location>
        <position position="223"/>
    </location>
    <ligand>
        <name>IMP</name>
        <dbReference type="ChEBI" id="CHEBI:58053"/>
        <note>ligand shared between dimeric partners</note>
    </ligand>
</feature>
<feature type="binding site" description="in other chain" evidence="1">
    <location>
        <position position="238"/>
    </location>
    <ligand>
        <name>IMP</name>
        <dbReference type="ChEBI" id="CHEBI:58053"/>
        <note>ligand shared between dimeric partners</note>
    </ligand>
</feature>
<feature type="binding site" evidence="1">
    <location>
        <begin position="298"/>
        <end position="304"/>
    </location>
    <ligand>
        <name>substrate</name>
    </ligand>
</feature>
<feature type="binding site" description="in other chain" evidence="1">
    <location>
        <position position="302"/>
    </location>
    <ligand>
        <name>IMP</name>
        <dbReference type="ChEBI" id="CHEBI:58053"/>
        <note>ligand shared between dimeric partners</note>
    </ligand>
</feature>
<feature type="binding site" evidence="1">
    <location>
        <position position="304"/>
    </location>
    <ligand>
        <name>GTP</name>
        <dbReference type="ChEBI" id="CHEBI:37565"/>
    </ligand>
</feature>
<feature type="binding site" evidence="1">
    <location>
        <begin position="330"/>
        <end position="332"/>
    </location>
    <ligand>
        <name>GTP</name>
        <dbReference type="ChEBI" id="CHEBI:37565"/>
    </ligand>
</feature>
<feature type="binding site" evidence="1">
    <location>
        <begin position="412"/>
        <end position="414"/>
    </location>
    <ligand>
        <name>GTP</name>
        <dbReference type="ChEBI" id="CHEBI:37565"/>
    </ligand>
</feature>
<name>PURA_TRIV2</name>
<dbReference type="EC" id="6.3.4.4" evidence="1"/>
<dbReference type="EMBL" id="CP000117">
    <property type="protein sequence ID" value="ABA21675.1"/>
    <property type="molecule type" value="Genomic_DNA"/>
</dbReference>
<dbReference type="SMR" id="Q3MBG1"/>
<dbReference type="STRING" id="240292.Ava_2053"/>
<dbReference type="KEGG" id="ava:Ava_2053"/>
<dbReference type="eggNOG" id="COG0104">
    <property type="taxonomic scope" value="Bacteria"/>
</dbReference>
<dbReference type="HOGENOM" id="CLU_029848_0_0_3"/>
<dbReference type="UniPathway" id="UPA00075">
    <property type="reaction ID" value="UER00335"/>
</dbReference>
<dbReference type="Proteomes" id="UP000002533">
    <property type="component" value="Chromosome"/>
</dbReference>
<dbReference type="GO" id="GO:0005737">
    <property type="term" value="C:cytoplasm"/>
    <property type="evidence" value="ECO:0007669"/>
    <property type="project" value="UniProtKB-SubCell"/>
</dbReference>
<dbReference type="GO" id="GO:0004019">
    <property type="term" value="F:adenylosuccinate synthase activity"/>
    <property type="evidence" value="ECO:0007669"/>
    <property type="project" value="UniProtKB-UniRule"/>
</dbReference>
<dbReference type="GO" id="GO:0005525">
    <property type="term" value="F:GTP binding"/>
    <property type="evidence" value="ECO:0007669"/>
    <property type="project" value="UniProtKB-UniRule"/>
</dbReference>
<dbReference type="GO" id="GO:0000287">
    <property type="term" value="F:magnesium ion binding"/>
    <property type="evidence" value="ECO:0007669"/>
    <property type="project" value="UniProtKB-UniRule"/>
</dbReference>
<dbReference type="GO" id="GO:0044208">
    <property type="term" value="P:'de novo' AMP biosynthetic process"/>
    <property type="evidence" value="ECO:0007669"/>
    <property type="project" value="UniProtKB-UniRule"/>
</dbReference>
<dbReference type="GO" id="GO:0046040">
    <property type="term" value="P:IMP metabolic process"/>
    <property type="evidence" value="ECO:0007669"/>
    <property type="project" value="TreeGrafter"/>
</dbReference>
<dbReference type="CDD" id="cd03108">
    <property type="entry name" value="AdSS"/>
    <property type="match status" value="1"/>
</dbReference>
<dbReference type="FunFam" id="1.10.300.10:FF:000001">
    <property type="entry name" value="Adenylosuccinate synthetase"/>
    <property type="match status" value="1"/>
</dbReference>
<dbReference type="FunFam" id="3.90.170.10:FF:000001">
    <property type="entry name" value="Adenylosuccinate synthetase"/>
    <property type="match status" value="1"/>
</dbReference>
<dbReference type="Gene3D" id="3.40.440.10">
    <property type="entry name" value="Adenylosuccinate Synthetase, subunit A, domain 1"/>
    <property type="match status" value="1"/>
</dbReference>
<dbReference type="Gene3D" id="1.10.300.10">
    <property type="entry name" value="Adenylosuccinate Synthetase, subunit A, domain 2"/>
    <property type="match status" value="1"/>
</dbReference>
<dbReference type="Gene3D" id="3.90.170.10">
    <property type="entry name" value="Adenylosuccinate Synthetase, subunit A, domain 3"/>
    <property type="match status" value="1"/>
</dbReference>
<dbReference type="HAMAP" id="MF_00011">
    <property type="entry name" value="Adenylosucc_synth"/>
    <property type="match status" value="1"/>
</dbReference>
<dbReference type="InterPro" id="IPR018220">
    <property type="entry name" value="Adenylosuccin_syn_GTP-bd"/>
</dbReference>
<dbReference type="InterPro" id="IPR033128">
    <property type="entry name" value="Adenylosuccin_syn_Lys_AS"/>
</dbReference>
<dbReference type="InterPro" id="IPR042109">
    <property type="entry name" value="Adenylosuccinate_synth_dom1"/>
</dbReference>
<dbReference type="InterPro" id="IPR042110">
    <property type="entry name" value="Adenylosuccinate_synth_dom2"/>
</dbReference>
<dbReference type="InterPro" id="IPR042111">
    <property type="entry name" value="Adenylosuccinate_synth_dom3"/>
</dbReference>
<dbReference type="InterPro" id="IPR001114">
    <property type="entry name" value="Adenylosuccinate_synthetase"/>
</dbReference>
<dbReference type="InterPro" id="IPR027417">
    <property type="entry name" value="P-loop_NTPase"/>
</dbReference>
<dbReference type="NCBIfam" id="NF002223">
    <property type="entry name" value="PRK01117.1"/>
    <property type="match status" value="1"/>
</dbReference>
<dbReference type="NCBIfam" id="TIGR00184">
    <property type="entry name" value="purA"/>
    <property type="match status" value="1"/>
</dbReference>
<dbReference type="PANTHER" id="PTHR11846">
    <property type="entry name" value="ADENYLOSUCCINATE SYNTHETASE"/>
    <property type="match status" value="1"/>
</dbReference>
<dbReference type="PANTHER" id="PTHR11846:SF0">
    <property type="entry name" value="ADENYLOSUCCINATE SYNTHETASE"/>
    <property type="match status" value="1"/>
</dbReference>
<dbReference type="Pfam" id="PF00709">
    <property type="entry name" value="Adenylsucc_synt"/>
    <property type="match status" value="1"/>
</dbReference>
<dbReference type="SMART" id="SM00788">
    <property type="entry name" value="Adenylsucc_synt"/>
    <property type="match status" value="1"/>
</dbReference>
<dbReference type="SUPFAM" id="SSF52540">
    <property type="entry name" value="P-loop containing nucleoside triphosphate hydrolases"/>
    <property type="match status" value="1"/>
</dbReference>
<dbReference type="PROSITE" id="PS01266">
    <property type="entry name" value="ADENYLOSUCCIN_SYN_1"/>
    <property type="match status" value="1"/>
</dbReference>
<dbReference type="PROSITE" id="PS00513">
    <property type="entry name" value="ADENYLOSUCCIN_SYN_2"/>
    <property type="match status" value="1"/>
</dbReference>
<comment type="function">
    <text evidence="1">Plays an important role in the de novo pathway of purine nucleotide biosynthesis. Catalyzes the first committed step in the biosynthesis of AMP from IMP.</text>
</comment>
<comment type="catalytic activity">
    <reaction evidence="1">
        <text>IMP + L-aspartate + GTP = N(6)-(1,2-dicarboxyethyl)-AMP + GDP + phosphate + 2 H(+)</text>
        <dbReference type="Rhea" id="RHEA:15753"/>
        <dbReference type="ChEBI" id="CHEBI:15378"/>
        <dbReference type="ChEBI" id="CHEBI:29991"/>
        <dbReference type="ChEBI" id="CHEBI:37565"/>
        <dbReference type="ChEBI" id="CHEBI:43474"/>
        <dbReference type="ChEBI" id="CHEBI:57567"/>
        <dbReference type="ChEBI" id="CHEBI:58053"/>
        <dbReference type="ChEBI" id="CHEBI:58189"/>
        <dbReference type="EC" id="6.3.4.4"/>
    </reaction>
</comment>
<comment type="cofactor">
    <cofactor evidence="1">
        <name>Mg(2+)</name>
        <dbReference type="ChEBI" id="CHEBI:18420"/>
    </cofactor>
    <text evidence="1">Binds 1 Mg(2+) ion per subunit.</text>
</comment>
<comment type="pathway">
    <text evidence="1">Purine metabolism; AMP biosynthesis via de novo pathway; AMP from IMP: step 1/2.</text>
</comment>
<comment type="subunit">
    <text evidence="1">Homodimer.</text>
</comment>
<comment type="subcellular location">
    <subcellularLocation>
        <location evidence="1">Cytoplasm</location>
    </subcellularLocation>
</comment>
<comment type="similarity">
    <text evidence="1">Belongs to the adenylosuccinate synthetase family.</text>
</comment>
<accession>Q3MBG1</accession>
<gene>
    <name evidence="1" type="primary">purA</name>
    <name type="ordered locus">Ava_2053</name>
</gene>
<organism>
    <name type="scientific">Trichormus variabilis (strain ATCC 29413 / PCC 7937)</name>
    <name type="common">Anabaena variabilis</name>
    <dbReference type="NCBI Taxonomy" id="240292"/>
    <lineage>
        <taxon>Bacteria</taxon>
        <taxon>Bacillati</taxon>
        <taxon>Cyanobacteriota</taxon>
        <taxon>Cyanophyceae</taxon>
        <taxon>Nostocales</taxon>
        <taxon>Nostocaceae</taxon>
        <taxon>Trichormus</taxon>
    </lineage>
</organism>
<reference key="1">
    <citation type="journal article" date="2014" name="Stand. Genomic Sci.">
        <title>Complete genome sequence of Anabaena variabilis ATCC 29413.</title>
        <authorList>
            <person name="Thiel T."/>
            <person name="Pratte B.S."/>
            <person name="Zhong J."/>
            <person name="Goodwin L."/>
            <person name="Copeland A."/>
            <person name="Lucas S."/>
            <person name="Han C."/>
            <person name="Pitluck S."/>
            <person name="Land M.L."/>
            <person name="Kyrpides N.C."/>
            <person name="Woyke T."/>
        </authorList>
    </citation>
    <scope>NUCLEOTIDE SEQUENCE [LARGE SCALE GENOMIC DNA]</scope>
    <source>
        <strain>ATCC 29413 / PCC 7937</strain>
    </source>
</reference>
<sequence length="447" mass="49140">MANVIVIGAQWGDEGKGKITDLLSRSADVVVRYQGGVNAGHTIVVKGQTFKLHLIPSGILYPDTECMIGCGTVIDPQVLIKELDQLESLNISTKNLLISETAHVTMPYHRLIDKASEERRGSHKIGTTGRGIGPTYADKSERTGIRVLDLMDPAALRDQLAWTINNKNLILEKLYNLPPLDTEEVVKEYLGYAERLRPHVVDTSLKIYDAIQRRRNILFEGAQGTLLDLDHGTYPYVTSSNPVAGGACVGTGLGPTMIDRVIGVSKAYTTRVGEGPFPTELDGELGELLCDRGAEFGTTTGRKRRCGWFDAVIGRYAVRINGMDCMAITKLDVLDELEEIQVCIAYEIDGDRCDHFPTSARQFARCRPIYKTLPGWQVPTSECRTLEDLPQQALDYLKFLAELMEVPIAIVSLGASRDQTIIVEDPIHGPKRALLHPDGTPASLLSA</sequence>
<proteinExistence type="inferred from homology"/>
<protein>
    <recommendedName>
        <fullName evidence="1">Adenylosuccinate synthetase</fullName>
        <shortName evidence="1">AMPSase</shortName>
        <shortName evidence="1">AdSS</shortName>
        <ecNumber evidence="1">6.3.4.4</ecNumber>
    </recommendedName>
    <alternativeName>
        <fullName evidence="1">IMP--aspartate ligase</fullName>
    </alternativeName>
</protein>
<keyword id="KW-0963">Cytoplasm</keyword>
<keyword id="KW-0342">GTP-binding</keyword>
<keyword id="KW-0436">Ligase</keyword>
<keyword id="KW-0460">Magnesium</keyword>
<keyword id="KW-0479">Metal-binding</keyword>
<keyword id="KW-0547">Nucleotide-binding</keyword>
<keyword id="KW-0658">Purine biosynthesis</keyword>